<name>USP9Y_MOUSE</name>
<keyword id="KW-0378">Hydrolase</keyword>
<keyword id="KW-0479">Metal-binding</keyword>
<keyword id="KW-0597">Phosphoprotein</keyword>
<keyword id="KW-0645">Protease</keyword>
<keyword id="KW-1185">Reference proteome</keyword>
<keyword id="KW-0788">Thiol protease</keyword>
<keyword id="KW-0833">Ubl conjugation pathway</keyword>
<keyword id="KW-0862">Zinc</keyword>
<proteinExistence type="evidence at transcript level"/>
<accession>F8VPU6</accession>
<accession>Q91XW2</accession>
<reference key="1">
    <citation type="journal article" date="2003" name="Mamm. Genome">
        <title>Usp9y (ubiquitin-specific protease 9 gene on the Y) is associated with a functional promoter and encodes an intact open reading frame homologous to Usp9x that is under selective constraint.</title>
        <authorList>
            <person name="Hall N.M."/>
            <person name="Brown G.M."/>
            <person name="Furlong R.A."/>
            <person name="Sargent C.A."/>
            <person name="Mitchell M."/>
            <person name="Rocha D."/>
            <person name="Affara N.A."/>
        </authorList>
    </citation>
    <scope>NUCLEOTIDE SEQUENCE [MRNA]</scope>
    <source>
        <strain>BALB/cJ</strain>
        <tissue>Testis</tissue>
    </source>
</reference>
<reference key="2">
    <citation type="journal article" date="2009" name="PLoS Biol.">
        <title>Lineage-specific biology revealed by a finished genome assembly of the mouse.</title>
        <authorList>
            <person name="Church D.M."/>
            <person name="Goodstadt L."/>
            <person name="Hillier L.W."/>
            <person name="Zody M.C."/>
            <person name="Goldstein S."/>
            <person name="She X."/>
            <person name="Bult C.J."/>
            <person name="Agarwala R."/>
            <person name="Cherry J.L."/>
            <person name="DiCuccio M."/>
            <person name="Hlavina W."/>
            <person name="Kapustin Y."/>
            <person name="Meric P."/>
            <person name="Maglott D."/>
            <person name="Birtle Z."/>
            <person name="Marques A.C."/>
            <person name="Graves T."/>
            <person name="Zhou S."/>
            <person name="Teague B."/>
            <person name="Potamousis K."/>
            <person name="Churas C."/>
            <person name="Place M."/>
            <person name="Herschleb J."/>
            <person name="Runnheim R."/>
            <person name="Forrest D."/>
            <person name="Amos-Landgraf J."/>
            <person name="Schwartz D.C."/>
            <person name="Cheng Z."/>
            <person name="Lindblad-Toh K."/>
            <person name="Eichler E.E."/>
            <person name="Ponting C.P."/>
        </authorList>
    </citation>
    <scope>NUCLEOTIDE SEQUENCE [LARGE SCALE GENOMIC DNA]</scope>
    <source>
        <strain>C57BL/6J</strain>
    </source>
</reference>
<sequence length="2556" mass="292267">MTITTRGSPVGENESQGQTSDGQPQPSFQQNQISSSDSSNETSPTTPPYEQGQGDAPPQHEEEDPSFPHTDLAKLEDMINRSRWVVPVLPKGELEVLLEASIDLTKKGLDVKSEACQRFFRDVLTVSFSKILMDEAVSGWKFEIHRCIINNTHRLVELCVAKLSQDWFPFLELLAIALNPHCKFHVYNGARPCESVSSSVQFPEDELFACSPDLHSPKGWLVDLINTFGTLNGFQILHDRFTSGSALNVQTIAALIKPFGQCYEFLTQHTLRKYFIPVIEVVPQILQKLTNEELKKETKTEVKNDTISMIIKFLKNLASRIPGQEETVKNLETFRLKMILRLLQISSFNGKMNALNEINKVLSSVSYYTHGHGNSEEEWLTVERMTEWIQQNNILSIVLQDSLHQPQYVEKIEKILRFVIKEKALTLQDLNNIWAAQAGKHEAIVKNVHDLLAKLAWNFSPEQLDHLFDCFKASWTNASKKQREKLLELIRRLAEDDKDGVMAHKVLNLLWNLAHSDDVPVDIMDLALSAHIKILDYSCSQDRDTQKIQWIDCFIEEFRTNNKWVIPALKQIKEICSLFGEAPQNLSQTHQSPRVFYRHDLISQLQHNHALVTLVAENLAAYMNSIRLYARDHEDYDPQTVRLGSRYSHVQEVQERLNFLRFLLKDGQLWLCVSQAKQIWNCLAENAVYFSDREACFMWYSKLMGDEPDLHPDINKEFFESNVLQLDPSLLTENGMKCFERFFKTVNCREGKLMIKRKIYMMDDLDLIGLDYLWKVVIQSNDDISSRAIDLLKEIYTSLGPKLQANQVVIHEDFIQSCFDRLKASYDTLCVLDSEKDNIFSCARQEAIRMVRILTVLREYISEYDSDYHEERMILPMSRAFRGKHLSFTVRFPNQGKEVEDLDILSHTNATIGSVRRCILNRMNVNVAHTKIELFIGGELVASEDDRKLVEQLNLKDKSLITAKFIQINSNMPSSPDSSSDSSAGPPGNHSHNNYRDVSNPEMEKCLPGVIMSLQPRYISFLWQVADLGSMLTVPTLRDGARILMKLMPPDSTTLEQLRALCSDHVNLGERRLGQSLHSLFFGSSASQVLYLTEVVYTLLMPAGAPLADISSDFQYHFLKSGGLPLVLSMLIQNNFLPNTDVETRRDAYFSALKIAKLLLTIVGYGHVQAIAEACQPVADGTDPKTPINQVTHDQAVVLQNALQSIPNPSSECMLRNVSVHLAQQISGLASRYIPDICVIRAIQKIIWAAGCGSLELVFSPNEDITETYKMTTSTRSNLEVKDEQVCCEALEVMTLCFALIPTAMDSLNKEKAWQSFVIDLLLYCPSKTVRQLAQEQFFLICTRCCMGHRPLLFFITLLFTILGGAANEKGKHSDVYFTLLRRLLTYAYNSNIQVPNVDVLLNDEIDWLKRVRDYIKNTGETNVEDPILEGHLGVTKELLSFQSPEKKYHIGCKTGGANLVKELIDYFIFPASKAYLQYMRSGELPIKQAIPVCGSPATINAGFELLVALAFGCVRNLKQIVNCLTELFYIGTPVTTCEAVGEWEYLPPVGPRPPKGFVGLKNAGATCYMNSVIQQLYMIPSIRNSILAIDSIWSDTDDDIFKGEKQDSENNVDPRDDVFRYPHQFEDKPTLSKVEDRKEYNIAVLKHLQITFGHLAASQLQYYVPKGFWQQFRLWGEPVNLREQHDALEFFNSLVDSLDEAFKALGYPTVLSKVLGGSFADQKICQGCPHRYECEESFTTLNVDIRNHQNLLDSLEQYVKGDLLEGANAYHCEKCDKKVDTVKRLLIKKLPSVLTIQLKRFDYDWERECAIKFNDYFEFPRELDMEPYTVAGATKLEGDSVNPQTQLIKQNEQSESVIPGSTKYRLVGVLVHSGQANGGHYYSYIIQRNGKDSKRSHWFKFDDGDVTECKMDDDEEMKNQCFGGEYMGEVFDHMMKRMSYRRQKRWWNAYILFYERMDITDEDDEIITYISELTFTRPHQIMSPAIERSVWKQNVQFLHNQMQFSLEYFQFIKKLLTCNAVYLSPAPGQDHLLPEAEDITMISIQLASRFLFTTGFHTKKIIRGPANDWYDALCILLRHSKNVRFWFVHNVLFNVSNRFSEYLLECPSAEIRGTFAKLIVFIAHFSLQDGSSPSPFTSPFANPGPYSQIYDNLSLSDHLLKAVLSLLRREVSEHGRHLQQYFNLFIMYASLGLAEKTQLLKLNVPATFMLVSLDEGPGPPVKYQYAELSKLHSVVSQLIRCCSVSSRMQSSINGNPPLPNPFGDPNLSQPIMPIQQNVADILFMRTTYMKKVIEDCSNSEDTVKLLLFCCWENPQFSCSVLSELLWQVAHSHAYELQPYLDLLLQIILFEDSWQAHRIHNALKGIPNDQDGLFDTIQHSKNHHQKRAYQCIKWMVTLFNSCPVAYQILQGNGDLKNKWTWAMEWLGDELERKPYSGNPQYTYSNWSPPVQSNETANGYFLEKSHSAKMKLTKACDLYPEEDPDDQDALDEHVSHAPQDRTFYLYSHRSHYQQNYVPEQPFSGPASHHLNNPQKNDKPQETHESNEEISSCLIKDQ</sequence>
<dbReference type="EC" id="3.4.19.12" evidence="1"/>
<dbReference type="EMBL" id="AJ307017">
    <property type="protein sequence ID" value="CAC38831.1"/>
    <property type="molecule type" value="mRNA"/>
</dbReference>
<dbReference type="CCDS" id="CCDS30544.1"/>
<dbReference type="RefSeq" id="NP_683745.2">
    <property type="nucleotide sequence ID" value="NM_148943.2"/>
</dbReference>
<dbReference type="SMR" id="F8VPU6"/>
<dbReference type="FunCoup" id="F8VPU6">
    <property type="interactions" value="318"/>
</dbReference>
<dbReference type="STRING" id="10090.ENSMUSP00000088727"/>
<dbReference type="MEROPS" id="C19.051"/>
<dbReference type="GlyGen" id="F8VPU6">
    <property type="glycosylation" value="2 sites, 2 N-linked glycans (2 sites)"/>
</dbReference>
<dbReference type="PhosphoSitePlus" id="F8VPU6"/>
<dbReference type="SwissPalm" id="F8VPU6"/>
<dbReference type="jPOST" id="F8VPU6"/>
<dbReference type="PaxDb" id="10090-ENSMUSP00000088727"/>
<dbReference type="PeptideAtlas" id="F8VPU6"/>
<dbReference type="ProteomicsDB" id="359008"/>
<dbReference type="Antibodypedia" id="21866">
    <property type="antibodies" value="37 antibodies from 15 providers"/>
</dbReference>
<dbReference type="DNASU" id="107868"/>
<dbReference type="Ensembl" id="ENSMUST00000091188.7">
    <property type="protein sequence ID" value="ENSMUSP00000088727.6"/>
    <property type="gene ID" value="ENSMUSG00000069044.7"/>
</dbReference>
<dbReference type="GeneID" id="107868"/>
<dbReference type="KEGG" id="mmu:107868"/>
<dbReference type="UCSC" id="uc009uzo.1">
    <property type="organism name" value="mouse"/>
</dbReference>
<dbReference type="AGR" id="MGI:1313274"/>
<dbReference type="CTD" id="8287"/>
<dbReference type="MGI" id="MGI:1313274">
    <property type="gene designation" value="Usp9y"/>
</dbReference>
<dbReference type="VEuPathDB" id="HostDB:ENSMUSG00000069044"/>
<dbReference type="eggNOG" id="KOG1866">
    <property type="taxonomic scope" value="Eukaryota"/>
</dbReference>
<dbReference type="GeneTree" id="ENSGT00940000155375"/>
<dbReference type="HOGENOM" id="CLU_000331_1_0_1"/>
<dbReference type="InParanoid" id="F8VPU6"/>
<dbReference type="OMA" id="CSCYMNS"/>
<dbReference type="OrthoDB" id="34897at9989"/>
<dbReference type="PhylomeDB" id="F8VPU6"/>
<dbReference type="TreeFam" id="TF323966"/>
<dbReference type="UniPathway" id="UPA00143"/>
<dbReference type="BioGRID-ORCS" id="107868">
    <property type="hits" value="0 hits in 79 CRISPR screens"/>
</dbReference>
<dbReference type="ChiTaRS" id="Usp9y">
    <property type="organism name" value="mouse"/>
</dbReference>
<dbReference type="PRO" id="PR:F8VPU6"/>
<dbReference type="Proteomes" id="UP000000589">
    <property type="component" value="Chromosome Y"/>
</dbReference>
<dbReference type="RNAct" id="F8VPU6">
    <property type="molecule type" value="protein"/>
</dbReference>
<dbReference type="Bgee" id="ENSMUSG00000069044">
    <property type="expression patterns" value="Expressed in spermatid and 7 other cell types or tissues"/>
</dbReference>
<dbReference type="GO" id="GO:0004843">
    <property type="term" value="F:cysteine-type deubiquitinase activity"/>
    <property type="evidence" value="ECO:0007669"/>
    <property type="project" value="UniProtKB-EC"/>
</dbReference>
<dbReference type="GO" id="GO:0046872">
    <property type="term" value="F:metal ion binding"/>
    <property type="evidence" value="ECO:0007669"/>
    <property type="project" value="UniProtKB-KW"/>
</dbReference>
<dbReference type="GO" id="GO:0016579">
    <property type="term" value="P:protein deubiquitination"/>
    <property type="evidence" value="ECO:0007669"/>
    <property type="project" value="InterPro"/>
</dbReference>
<dbReference type="GO" id="GO:0016567">
    <property type="term" value="P:protein ubiquitination"/>
    <property type="evidence" value="ECO:0007669"/>
    <property type="project" value="UniProtKB-UniPathway"/>
</dbReference>
<dbReference type="GO" id="GO:0006508">
    <property type="term" value="P:proteolysis"/>
    <property type="evidence" value="ECO:0007669"/>
    <property type="project" value="UniProtKB-KW"/>
</dbReference>
<dbReference type="CDD" id="cd02659">
    <property type="entry name" value="peptidase_C19C"/>
    <property type="match status" value="1"/>
</dbReference>
<dbReference type="Gene3D" id="3.90.70.10">
    <property type="entry name" value="Cysteine proteinases"/>
    <property type="match status" value="1"/>
</dbReference>
<dbReference type="InterPro" id="IPR016024">
    <property type="entry name" value="ARM-type_fold"/>
</dbReference>
<dbReference type="InterPro" id="IPR056850">
    <property type="entry name" value="ARM_UBP34_24_USP9X_Y"/>
</dbReference>
<dbReference type="InterPro" id="IPR021905">
    <property type="entry name" value="DUF3517"/>
</dbReference>
<dbReference type="InterPro" id="IPR038765">
    <property type="entry name" value="Papain-like_cys_pep_sf"/>
</dbReference>
<dbReference type="InterPro" id="IPR050164">
    <property type="entry name" value="Peptidase_C19"/>
</dbReference>
<dbReference type="InterPro" id="IPR001394">
    <property type="entry name" value="Peptidase_C19_UCH"/>
</dbReference>
<dbReference type="InterPro" id="IPR055176">
    <property type="entry name" value="UBP24/USP9X/USP9Y_UBL"/>
</dbReference>
<dbReference type="InterPro" id="IPR018200">
    <property type="entry name" value="USP_CS"/>
</dbReference>
<dbReference type="InterPro" id="IPR028889">
    <property type="entry name" value="USP_dom"/>
</dbReference>
<dbReference type="PANTHER" id="PTHR24006">
    <property type="entry name" value="UBIQUITIN CARBOXYL-TERMINAL HYDROLASE"/>
    <property type="match status" value="1"/>
</dbReference>
<dbReference type="PANTHER" id="PTHR24006:SF912">
    <property type="entry name" value="UBIQUITINYL HYDROLASE 1"/>
    <property type="match status" value="1"/>
</dbReference>
<dbReference type="Pfam" id="PF25010">
    <property type="entry name" value="ARM_UBP24_USP9X-Y"/>
    <property type="match status" value="1"/>
</dbReference>
<dbReference type="Pfam" id="PF12030">
    <property type="entry name" value="DUF3517"/>
    <property type="match status" value="1"/>
</dbReference>
<dbReference type="Pfam" id="PF00443">
    <property type="entry name" value="UCH"/>
    <property type="match status" value="1"/>
</dbReference>
<dbReference type="Pfam" id="PF22900">
    <property type="entry name" value="UCH_UBL1"/>
    <property type="match status" value="1"/>
</dbReference>
<dbReference type="SUPFAM" id="SSF48371">
    <property type="entry name" value="ARM repeat"/>
    <property type="match status" value="1"/>
</dbReference>
<dbReference type="SUPFAM" id="SSF54001">
    <property type="entry name" value="Cysteine proteinases"/>
    <property type="match status" value="1"/>
</dbReference>
<dbReference type="PROSITE" id="PS00972">
    <property type="entry name" value="USP_1"/>
    <property type="match status" value="1"/>
</dbReference>
<dbReference type="PROSITE" id="PS00973">
    <property type="entry name" value="USP_2"/>
    <property type="match status" value="1"/>
</dbReference>
<dbReference type="PROSITE" id="PS50235">
    <property type="entry name" value="USP_3"/>
    <property type="match status" value="1"/>
</dbReference>
<evidence type="ECO:0000250" key="1">
    <source>
        <dbReference type="UniProtKB" id="O00507"/>
    </source>
</evidence>
<evidence type="ECO:0000250" key="2">
    <source>
        <dbReference type="UniProtKB" id="Q93008"/>
    </source>
</evidence>
<evidence type="ECO:0000255" key="3">
    <source>
        <dbReference type="PROSITE-ProRule" id="PRU01035"/>
    </source>
</evidence>
<evidence type="ECO:0000256" key="4">
    <source>
        <dbReference type="SAM" id="MobiDB-lite"/>
    </source>
</evidence>
<evidence type="ECO:0000303" key="5">
    <source>
    </source>
</evidence>
<evidence type="ECO:0000305" key="6"/>
<evidence type="ECO:0000312" key="7">
    <source>
        <dbReference type="MGI" id="MGI:1313274"/>
    </source>
</evidence>
<feature type="chain" id="PRO_0000459397" description="Ubiquitin carboxyl-terminal hydrolase 9Y">
    <location>
        <begin position="1"/>
        <end position="2556"/>
    </location>
</feature>
<feature type="domain" description="USP" evidence="3">
    <location>
        <begin position="1559"/>
        <end position="1958"/>
    </location>
</feature>
<feature type="region of interest" description="Disordered" evidence="4">
    <location>
        <begin position="1"/>
        <end position="68"/>
    </location>
</feature>
<feature type="region of interest" description="Disordered" evidence="4">
    <location>
        <begin position="971"/>
        <end position="999"/>
    </location>
</feature>
<feature type="region of interest" description="Disordered" evidence="4">
    <location>
        <begin position="2513"/>
        <end position="2556"/>
    </location>
</feature>
<feature type="compositionally biased region" description="Polar residues" evidence="4">
    <location>
        <begin position="1"/>
        <end position="33"/>
    </location>
</feature>
<feature type="compositionally biased region" description="Low complexity" evidence="4">
    <location>
        <begin position="34"/>
        <end position="44"/>
    </location>
</feature>
<feature type="compositionally biased region" description="Low complexity" evidence="4">
    <location>
        <begin position="973"/>
        <end position="983"/>
    </location>
</feature>
<feature type="compositionally biased region" description="Basic and acidic residues" evidence="4">
    <location>
        <begin position="2534"/>
        <end position="2545"/>
    </location>
</feature>
<feature type="active site" description="Nucleophile" evidence="3">
    <location>
        <position position="1568"/>
    </location>
</feature>
<feature type="active site" description="Proton acceptor" evidence="3">
    <location>
        <position position="1881"/>
    </location>
</feature>
<feature type="binding site" evidence="2">
    <location>
        <position position="1729"/>
    </location>
    <ligand>
        <name>Zn(2+)</name>
        <dbReference type="ChEBI" id="CHEBI:29105"/>
    </ligand>
</feature>
<feature type="binding site" evidence="2">
    <location>
        <position position="1731"/>
    </location>
    <ligand>
        <name>Zn(2+)</name>
        <dbReference type="ChEBI" id="CHEBI:29105"/>
    </ligand>
</feature>
<feature type="binding site" evidence="2">
    <location>
        <position position="1773"/>
    </location>
    <ligand>
        <name>Zn(2+)</name>
        <dbReference type="ChEBI" id="CHEBI:29105"/>
    </ligand>
</feature>
<feature type="binding site" evidence="2">
    <location>
        <position position="1776"/>
    </location>
    <ligand>
        <name>Zn(2+)</name>
        <dbReference type="ChEBI" id="CHEBI:29105"/>
    </ligand>
</feature>
<feature type="modified residue" description="Phosphoserine" evidence="2">
    <location>
        <position position="587"/>
    </location>
</feature>
<feature type="modified residue" description="Phosphothreonine" evidence="2">
    <location>
        <position position="589"/>
    </location>
</feature>
<feature type="modified residue" description="Phosphoserine" evidence="2">
    <location>
        <position position="2447"/>
    </location>
</feature>
<feature type="modified residue" description="Phosphoserine" evidence="2">
    <location>
        <position position="2549"/>
    </location>
</feature>
<feature type="sequence conflict" description="In Ref. 1; CAC38831." evidence="6" ref="1">
    <original>L</original>
    <variation>P</variation>
    <location>
        <position position="72"/>
    </location>
</feature>
<feature type="sequence conflict" description="In Ref. 1; CAC38831." evidence="6" ref="1">
    <original>A</original>
    <variation>T</variation>
    <location>
        <position position="100"/>
    </location>
</feature>
<feature type="sequence conflict" description="In Ref. 1; CAC38831." evidence="6" ref="1">
    <original>L</original>
    <variation>P</variation>
    <location>
        <position position="255"/>
    </location>
</feature>
<feature type="sequence conflict" description="In Ref. 1; CAC38831." evidence="6" ref="1">
    <original>E</original>
    <variation>G</variation>
    <location>
        <position position="377"/>
    </location>
</feature>
<feature type="sequence conflict" description="In Ref. 1; CAC38831." evidence="6" ref="1">
    <original>Y</original>
    <variation>F</variation>
    <location>
        <position position="1578"/>
    </location>
</feature>
<protein>
    <recommendedName>
        <fullName evidence="6">Ubiquitin carboxyl-terminal hydrolase 9Y</fullName>
        <ecNumber evidence="1">3.4.19.12</ecNumber>
    </recommendedName>
</protein>
<comment type="function">
    <text evidence="1">Deubiquitinase that mediates deubiquitination of target proteins. May stabilize target proteins that are important for male germ cell development.</text>
</comment>
<comment type="catalytic activity">
    <reaction evidence="1">
        <text>Thiol-dependent hydrolysis of ester, thioester, amide, peptide and isopeptide bonds formed by the C-terminal Gly of ubiquitin (a 76-residue protein attached to proteins as an intracellular targeting signal).</text>
        <dbReference type="EC" id="3.4.19.12"/>
    </reaction>
</comment>
<comment type="pathway">
    <text evidence="1">Protein modification; protein ubiquitination.</text>
</comment>
<comment type="similarity">
    <text evidence="6">Belongs to the peptidase C19 family.</text>
</comment>
<gene>
    <name evidence="5 7" type="primary">Usp9y</name>
</gene>
<organism>
    <name type="scientific">Mus musculus</name>
    <name type="common">Mouse</name>
    <dbReference type="NCBI Taxonomy" id="10090"/>
    <lineage>
        <taxon>Eukaryota</taxon>
        <taxon>Metazoa</taxon>
        <taxon>Chordata</taxon>
        <taxon>Craniata</taxon>
        <taxon>Vertebrata</taxon>
        <taxon>Euteleostomi</taxon>
        <taxon>Mammalia</taxon>
        <taxon>Eutheria</taxon>
        <taxon>Euarchontoglires</taxon>
        <taxon>Glires</taxon>
        <taxon>Rodentia</taxon>
        <taxon>Myomorpha</taxon>
        <taxon>Muroidea</taxon>
        <taxon>Muridae</taxon>
        <taxon>Murinae</taxon>
        <taxon>Mus</taxon>
        <taxon>Mus</taxon>
    </lineage>
</organism>